<reference key="1">
    <citation type="journal article" date="2008" name="DNA Res.">
        <title>Complete genome sequence and comparative analysis of the wild-type commensal Escherichia coli strain SE11 isolated from a healthy adult.</title>
        <authorList>
            <person name="Oshima K."/>
            <person name="Toh H."/>
            <person name="Ogura Y."/>
            <person name="Sasamoto H."/>
            <person name="Morita H."/>
            <person name="Park S.-H."/>
            <person name="Ooka T."/>
            <person name="Iyoda S."/>
            <person name="Taylor T.D."/>
            <person name="Hayashi T."/>
            <person name="Itoh K."/>
            <person name="Hattori M."/>
        </authorList>
    </citation>
    <scope>NUCLEOTIDE SEQUENCE [LARGE SCALE GENOMIC DNA]</scope>
    <source>
        <strain>SE11</strain>
    </source>
</reference>
<accession>B6I408</accession>
<evidence type="ECO:0000255" key="1">
    <source>
        <dbReference type="HAMAP-Rule" id="MF_01188"/>
    </source>
</evidence>
<evidence type="ECO:0000256" key="2">
    <source>
        <dbReference type="SAM" id="MobiDB-lite"/>
    </source>
</evidence>
<dbReference type="EMBL" id="AP009240">
    <property type="protein sequence ID" value="BAG78841.1"/>
    <property type="molecule type" value="Genomic_DNA"/>
</dbReference>
<dbReference type="RefSeq" id="WP_000831543.1">
    <property type="nucleotide sequence ID" value="NC_011415.1"/>
</dbReference>
<dbReference type="SMR" id="B6I408"/>
<dbReference type="KEGG" id="ecy:ECSE_3317"/>
<dbReference type="HOGENOM" id="CLU_095624_0_0_6"/>
<dbReference type="Proteomes" id="UP000008199">
    <property type="component" value="Chromosome"/>
</dbReference>
<dbReference type="HAMAP" id="MF_01188">
    <property type="entry name" value="UPF0441"/>
    <property type="match status" value="1"/>
</dbReference>
<dbReference type="InterPro" id="IPR009576">
    <property type="entry name" value="Biofilm_formation_YgiB"/>
</dbReference>
<dbReference type="NCBIfam" id="NF008655">
    <property type="entry name" value="PRK11653.1"/>
    <property type="match status" value="1"/>
</dbReference>
<dbReference type="Pfam" id="PF06693">
    <property type="entry name" value="DUF1190"/>
    <property type="match status" value="1"/>
</dbReference>
<proteinExistence type="inferred from homology"/>
<gene>
    <name evidence="1" type="primary">ygiB</name>
    <name type="ordered locus">ECSE_3317</name>
</gene>
<protein>
    <recommendedName>
        <fullName evidence="1">UPF0441 protein YgiB</fullName>
    </recommendedName>
</protein>
<feature type="chain" id="PRO_1000138343" description="UPF0441 protein YgiB">
    <location>
        <begin position="1"/>
        <end position="223"/>
    </location>
</feature>
<feature type="region of interest" description="Disordered" evidence="2">
    <location>
        <begin position="178"/>
        <end position="223"/>
    </location>
</feature>
<feature type="compositionally biased region" description="Low complexity" evidence="2">
    <location>
        <begin position="178"/>
        <end position="195"/>
    </location>
</feature>
<feature type="compositionally biased region" description="Polar residues" evidence="2">
    <location>
        <begin position="204"/>
        <end position="223"/>
    </location>
</feature>
<name>YGIB_ECOSE</name>
<sequence>MKRTKSIRHASFRKNWSARHLTPVALAVATVFMLAGCEKSDETVSLYQNADDCSAANPGKSAECTTAYNNALKEAERTAPKYATREDCVAEFGEGQCQQAPAQAGMAPENQAQAQQSSGSFWMPLMAGYMMGRLMGGGAGFAQQPLFSSKNPASPAYGKYTDATGKNYGAAQPGRTMTVPKTAMAPKPATTTTVTRGGFGESVAKQSTMQRSATGTSSRSMGG</sequence>
<organism>
    <name type="scientific">Escherichia coli (strain SE11)</name>
    <dbReference type="NCBI Taxonomy" id="409438"/>
    <lineage>
        <taxon>Bacteria</taxon>
        <taxon>Pseudomonadati</taxon>
        <taxon>Pseudomonadota</taxon>
        <taxon>Gammaproteobacteria</taxon>
        <taxon>Enterobacterales</taxon>
        <taxon>Enterobacteriaceae</taxon>
        <taxon>Escherichia</taxon>
    </lineage>
</organism>
<comment type="similarity">
    <text evidence="1">Belongs to the UPF0441 family.</text>
</comment>